<protein>
    <recommendedName>
        <fullName evidence="1">3-isopropylmalate dehydratase large subunit</fullName>
        <ecNumber evidence="1">4.2.1.33</ecNumber>
    </recommendedName>
    <alternativeName>
        <fullName evidence="1">Alpha-IPM isomerase</fullName>
        <shortName evidence="1">IPMI</shortName>
    </alternativeName>
    <alternativeName>
        <fullName evidence="1">Isopropylmalate isomerase</fullName>
    </alternativeName>
</protein>
<keyword id="KW-0004">4Fe-4S</keyword>
<keyword id="KW-0028">Amino-acid biosynthesis</keyword>
<keyword id="KW-0100">Branched-chain amino acid biosynthesis</keyword>
<keyword id="KW-0408">Iron</keyword>
<keyword id="KW-0411">Iron-sulfur</keyword>
<keyword id="KW-0432">Leucine biosynthesis</keyword>
<keyword id="KW-0456">Lyase</keyword>
<keyword id="KW-0479">Metal-binding</keyword>
<keyword id="KW-1185">Reference proteome</keyword>
<gene>
    <name evidence="1" type="primary">leuC</name>
    <name type="ordered locus">BCAN_A1950</name>
</gene>
<accession>A9M8P2</accession>
<evidence type="ECO:0000255" key="1">
    <source>
        <dbReference type="HAMAP-Rule" id="MF_01026"/>
    </source>
</evidence>
<organism>
    <name type="scientific">Brucella canis (strain ATCC 23365 / NCTC 10854 / RM-666)</name>
    <dbReference type="NCBI Taxonomy" id="483179"/>
    <lineage>
        <taxon>Bacteria</taxon>
        <taxon>Pseudomonadati</taxon>
        <taxon>Pseudomonadota</taxon>
        <taxon>Alphaproteobacteria</taxon>
        <taxon>Hyphomicrobiales</taxon>
        <taxon>Brucellaceae</taxon>
        <taxon>Brucella/Ochrobactrum group</taxon>
        <taxon>Brucella</taxon>
    </lineage>
</organism>
<proteinExistence type="inferred from homology"/>
<feature type="chain" id="PRO_1000084209" description="3-isopropylmalate dehydratase large subunit">
    <location>
        <begin position="1"/>
        <end position="469"/>
    </location>
</feature>
<feature type="binding site" evidence="1">
    <location>
        <position position="350"/>
    </location>
    <ligand>
        <name>[4Fe-4S] cluster</name>
        <dbReference type="ChEBI" id="CHEBI:49883"/>
    </ligand>
</feature>
<feature type="binding site" evidence="1">
    <location>
        <position position="410"/>
    </location>
    <ligand>
        <name>[4Fe-4S] cluster</name>
        <dbReference type="ChEBI" id="CHEBI:49883"/>
    </ligand>
</feature>
<feature type="binding site" evidence="1">
    <location>
        <position position="413"/>
    </location>
    <ligand>
        <name>[4Fe-4S] cluster</name>
        <dbReference type="ChEBI" id="CHEBI:49883"/>
    </ligand>
</feature>
<name>LEUC_BRUC2</name>
<comment type="function">
    <text evidence="1">Catalyzes the isomerization between 2-isopropylmalate and 3-isopropylmalate, via the formation of 2-isopropylmaleate.</text>
</comment>
<comment type="catalytic activity">
    <reaction evidence="1">
        <text>(2R,3S)-3-isopropylmalate = (2S)-2-isopropylmalate</text>
        <dbReference type="Rhea" id="RHEA:32287"/>
        <dbReference type="ChEBI" id="CHEBI:1178"/>
        <dbReference type="ChEBI" id="CHEBI:35121"/>
        <dbReference type="EC" id="4.2.1.33"/>
    </reaction>
</comment>
<comment type="cofactor">
    <cofactor evidence="1">
        <name>[4Fe-4S] cluster</name>
        <dbReference type="ChEBI" id="CHEBI:49883"/>
    </cofactor>
    <text evidence="1">Binds 1 [4Fe-4S] cluster per subunit.</text>
</comment>
<comment type="pathway">
    <text evidence="1">Amino-acid biosynthesis; L-leucine biosynthesis; L-leucine from 3-methyl-2-oxobutanoate: step 2/4.</text>
</comment>
<comment type="subunit">
    <text evidence="1">Heterodimer of LeuC and LeuD.</text>
</comment>
<comment type="similarity">
    <text evidence="1">Belongs to the aconitase/IPM isomerase family. LeuC type 1 subfamily.</text>
</comment>
<dbReference type="EC" id="4.2.1.33" evidence="1"/>
<dbReference type="EMBL" id="CP000872">
    <property type="protein sequence ID" value="ABX62940.1"/>
    <property type="molecule type" value="Genomic_DNA"/>
</dbReference>
<dbReference type="RefSeq" id="WP_002964974.1">
    <property type="nucleotide sequence ID" value="NC_010103.1"/>
</dbReference>
<dbReference type="SMR" id="A9M8P2"/>
<dbReference type="GeneID" id="93017762"/>
<dbReference type="KEGG" id="bcs:BCAN_A1950"/>
<dbReference type="HOGENOM" id="CLU_006714_3_4_5"/>
<dbReference type="UniPathway" id="UPA00048">
    <property type="reaction ID" value="UER00071"/>
</dbReference>
<dbReference type="PRO" id="PR:A9M8P2"/>
<dbReference type="Proteomes" id="UP000001385">
    <property type="component" value="Chromosome I"/>
</dbReference>
<dbReference type="GO" id="GO:0003861">
    <property type="term" value="F:3-isopropylmalate dehydratase activity"/>
    <property type="evidence" value="ECO:0007669"/>
    <property type="project" value="UniProtKB-UniRule"/>
</dbReference>
<dbReference type="GO" id="GO:0051539">
    <property type="term" value="F:4 iron, 4 sulfur cluster binding"/>
    <property type="evidence" value="ECO:0007669"/>
    <property type="project" value="UniProtKB-KW"/>
</dbReference>
<dbReference type="GO" id="GO:0046872">
    <property type="term" value="F:metal ion binding"/>
    <property type="evidence" value="ECO:0007669"/>
    <property type="project" value="UniProtKB-KW"/>
</dbReference>
<dbReference type="GO" id="GO:0009098">
    <property type="term" value="P:L-leucine biosynthetic process"/>
    <property type="evidence" value="ECO:0007669"/>
    <property type="project" value="UniProtKB-UniRule"/>
</dbReference>
<dbReference type="CDD" id="cd01583">
    <property type="entry name" value="IPMI"/>
    <property type="match status" value="1"/>
</dbReference>
<dbReference type="FunFam" id="3.30.499.10:FF:000006">
    <property type="entry name" value="3-isopropylmalate dehydratase large subunit"/>
    <property type="match status" value="1"/>
</dbReference>
<dbReference type="FunFam" id="3.30.499.10:FF:000007">
    <property type="entry name" value="3-isopropylmalate dehydratase large subunit"/>
    <property type="match status" value="1"/>
</dbReference>
<dbReference type="Gene3D" id="3.30.499.10">
    <property type="entry name" value="Aconitase, domain 3"/>
    <property type="match status" value="2"/>
</dbReference>
<dbReference type="HAMAP" id="MF_01026">
    <property type="entry name" value="LeuC_type1"/>
    <property type="match status" value="1"/>
</dbReference>
<dbReference type="InterPro" id="IPR004430">
    <property type="entry name" value="3-IsopropMal_deHydase_lsu"/>
</dbReference>
<dbReference type="InterPro" id="IPR015931">
    <property type="entry name" value="Acnase/IPM_dHydase_lsu_aba_1/3"/>
</dbReference>
<dbReference type="InterPro" id="IPR001030">
    <property type="entry name" value="Acoase/IPM_deHydtase_lsu_aba"/>
</dbReference>
<dbReference type="InterPro" id="IPR018136">
    <property type="entry name" value="Aconitase_4Fe-4S_BS"/>
</dbReference>
<dbReference type="InterPro" id="IPR036008">
    <property type="entry name" value="Aconitase_4Fe-4S_dom"/>
</dbReference>
<dbReference type="InterPro" id="IPR050067">
    <property type="entry name" value="IPM_dehydratase_rel_enz"/>
</dbReference>
<dbReference type="InterPro" id="IPR033941">
    <property type="entry name" value="IPMI_cat"/>
</dbReference>
<dbReference type="NCBIfam" id="TIGR00170">
    <property type="entry name" value="leuC"/>
    <property type="match status" value="1"/>
</dbReference>
<dbReference type="NCBIfam" id="NF004016">
    <property type="entry name" value="PRK05478.1"/>
    <property type="match status" value="1"/>
</dbReference>
<dbReference type="NCBIfam" id="NF009116">
    <property type="entry name" value="PRK12466.1"/>
    <property type="match status" value="1"/>
</dbReference>
<dbReference type="PANTHER" id="PTHR43822:SF9">
    <property type="entry name" value="3-ISOPROPYLMALATE DEHYDRATASE"/>
    <property type="match status" value="1"/>
</dbReference>
<dbReference type="PANTHER" id="PTHR43822">
    <property type="entry name" value="HOMOACONITASE, MITOCHONDRIAL-RELATED"/>
    <property type="match status" value="1"/>
</dbReference>
<dbReference type="Pfam" id="PF00330">
    <property type="entry name" value="Aconitase"/>
    <property type="match status" value="1"/>
</dbReference>
<dbReference type="PRINTS" id="PR00415">
    <property type="entry name" value="ACONITASE"/>
</dbReference>
<dbReference type="SUPFAM" id="SSF53732">
    <property type="entry name" value="Aconitase iron-sulfur domain"/>
    <property type="match status" value="1"/>
</dbReference>
<dbReference type="PROSITE" id="PS00450">
    <property type="entry name" value="ACONITASE_1"/>
    <property type="match status" value="1"/>
</dbReference>
<dbReference type="PROSITE" id="PS01244">
    <property type="entry name" value="ACONITASE_2"/>
    <property type="match status" value="1"/>
</dbReference>
<reference key="1">
    <citation type="submission" date="2007-10" db="EMBL/GenBank/DDBJ databases">
        <title>Brucella canis ATCC 23365 whole genome shotgun sequencing project.</title>
        <authorList>
            <person name="Setubal J.C."/>
            <person name="Bowns C."/>
            <person name="Boyle S."/>
            <person name="Crasta O.R."/>
            <person name="Czar M.J."/>
            <person name="Dharmanolla C."/>
            <person name="Gillespie J.J."/>
            <person name="Kenyon R.W."/>
            <person name="Lu J."/>
            <person name="Mane S."/>
            <person name="Mohapatra S."/>
            <person name="Nagrani S."/>
            <person name="Purkayastha A."/>
            <person name="Rajasimha H.K."/>
            <person name="Shallom J.M."/>
            <person name="Shallom S."/>
            <person name="Shukla M."/>
            <person name="Snyder E.E."/>
            <person name="Sobral B.W."/>
            <person name="Wattam A.R."/>
            <person name="Will R."/>
            <person name="Williams K."/>
            <person name="Yoo H."/>
            <person name="Bruce D."/>
            <person name="Detter C."/>
            <person name="Munk C."/>
            <person name="Brettin T.S."/>
        </authorList>
    </citation>
    <scope>NUCLEOTIDE SEQUENCE [LARGE SCALE GENOMIC DNA]</scope>
    <source>
        <strain>ATCC 23365 / NCTC 10854 / RM-666</strain>
    </source>
</reference>
<sequence>MSAPRTLYDKIWDDHVVDQQEDGTCLLYIDRHLVHEVTSPQAFEGLRMAGRPVRHPEKTLAVVDHNVPTSPDRINGIQNEESRIQVEALARNAADFGVEYYSERDKRQGIVHIVGPEQGFTLPGMTIVCGDSHTSTHGAFGALAHGIGTSEVEHVLATQTLIQKKAKNMLVRVDGKLPAGVTAKDIVLAIIGEIGTAGGTGYVIEYAGEAIRSLSMEGRMTICNMSIEGGARAGLIAPDETTFEYIKGRPRAPQGETLEQAINYWKTLHSDEGAHFDKIVTLDAGSLPPIVSWGSSPEDVVSVTGVVPNPDDIADETKRASKWRALDYMGLKPGTKITDIAVDRVFIGSCTNGRIEDLRAAAKVVEGKKVAPTVNAMIVPGSGLVKEQAEAEGLHKIFIEAGFDWREPGCSMCLAMNDDRLKPGERCASTSNRNFEGRQGFKGRTHLVSPAMAAAAAIAGHFVDIRAWK</sequence>